<protein>
    <recommendedName>
        <fullName>Uncharacterized protein YbiJ</fullName>
    </recommendedName>
</protein>
<proteinExistence type="inferred from homology"/>
<accession>P0AAX5</accession>
<accession>P41038</accession>
<sequence length="86" mass="8568">MKTINTVVAAMALSTLSFGVFAAEPVTASQAQNMNKIGVVSADGASTLDALEAKLAEKAAAAGASGYSITSATNNNKLSGTAVIYK</sequence>
<dbReference type="EMBL" id="AE005674">
    <property type="protein sequence ID" value="AAN42387.1"/>
    <property type="molecule type" value="Genomic_DNA"/>
</dbReference>
<dbReference type="EMBL" id="AE014073">
    <property type="protein sequence ID" value="AAP16264.1"/>
    <property type="molecule type" value="Genomic_DNA"/>
</dbReference>
<dbReference type="RefSeq" id="NP_706680.1">
    <property type="nucleotide sequence ID" value="NC_004337.2"/>
</dbReference>
<dbReference type="RefSeq" id="WP_000849301.1">
    <property type="nucleotide sequence ID" value="NZ_WPGW01000030.1"/>
</dbReference>
<dbReference type="SMR" id="P0AAX5"/>
<dbReference type="STRING" id="198214.SF0752"/>
<dbReference type="PaxDb" id="198214-SF0752"/>
<dbReference type="GeneID" id="1023700"/>
<dbReference type="GeneID" id="89520181"/>
<dbReference type="KEGG" id="sfl:SF0752"/>
<dbReference type="KEGG" id="sfx:S0793"/>
<dbReference type="PATRIC" id="fig|198214.7.peg.873"/>
<dbReference type="HOGENOM" id="CLU_158602_2_2_6"/>
<dbReference type="Proteomes" id="UP000001006">
    <property type="component" value="Chromosome"/>
</dbReference>
<dbReference type="Proteomes" id="UP000002673">
    <property type="component" value="Chromosome"/>
</dbReference>
<dbReference type="GO" id="GO:0042597">
    <property type="term" value="C:periplasmic space"/>
    <property type="evidence" value="ECO:0007669"/>
    <property type="project" value="UniProtKB-SubCell"/>
</dbReference>
<dbReference type="FunFam" id="3.30.1660.10:FF:000001">
    <property type="entry name" value="Multiple stress resistance protein BhsA"/>
    <property type="match status" value="1"/>
</dbReference>
<dbReference type="Gene3D" id="3.30.1660.10">
    <property type="entry name" value="Flavin-binding protein dodecin"/>
    <property type="match status" value="1"/>
</dbReference>
<dbReference type="InterPro" id="IPR051096">
    <property type="entry name" value="BhsA/McbA_stress_biofilm_assoc"/>
</dbReference>
<dbReference type="InterPro" id="IPR025543">
    <property type="entry name" value="Dodecin-like"/>
</dbReference>
<dbReference type="InterPro" id="IPR036275">
    <property type="entry name" value="YdgH-like_sf"/>
</dbReference>
<dbReference type="InterPro" id="IPR010854">
    <property type="entry name" value="YdgH/BhsA/McbA-like_dom"/>
</dbReference>
<dbReference type="NCBIfam" id="NF007611">
    <property type="entry name" value="PRK10259.1"/>
    <property type="match status" value="1"/>
</dbReference>
<dbReference type="NCBIfam" id="NF047859">
    <property type="entry name" value="StressCuResBhsA"/>
    <property type="match status" value="1"/>
</dbReference>
<dbReference type="PANTHER" id="PTHR34156">
    <property type="entry name" value="OUTER MEMBRANE PROTEIN-RELATED-RELATED"/>
    <property type="match status" value="1"/>
</dbReference>
<dbReference type="PANTHER" id="PTHR34156:SF1">
    <property type="entry name" value="PERIPLASMIC PROTEIN"/>
    <property type="match status" value="1"/>
</dbReference>
<dbReference type="Pfam" id="PF07338">
    <property type="entry name" value="YdgH_BhsA-like"/>
    <property type="match status" value="1"/>
</dbReference>
<dbReference type="SUPFAM" id="SSF159871">
    <property type="entry name" value="YdgH-like"/>
    <property type="match status" value="1"/>
</dbReference>
<organism>
    <name type="scientific">Shigella flexneri</name>
    <dbReference type="NCBI Taxonomy" id="623"/>
    <lineage>
        <taxon>Bacteria</taxon>
        <taxon>Pseudomonadati</taxon>
        <taxon>Pseudomonadota</taxon>
        <taxon>Gammaproteobacteria</taxon>
        <taxon>Enterobacterales</taxon>
        <taxon>Enterobacteriaceae</taxon>
        <taxon>Shigella</taxon>
    </lineage>
</organism>
<comment type="subcellular location">
    <subcellularLocation>
        <location evidence="2">Periplasm</location>
    </subcellularLocation>
</comment>
<comment type="similarity">
    <text evidence="2">Belongs to the BhsA/McbA family.</text>
</comment>
<evidence type="ECO:0000255" key="1"/>
<evidence type="ECO:0000305" key="2"/>
<gene>
    <name type="primary">ybiJ</name>
    <name type="ordered locus">SF0752</name>
    <name type="ordered locus">S0793</name>
</gene>
<feature type="signal peptide" evidence="1">
    <location>
        <begin position="1"/>
        <end position="22"/>
    </location>
</feature>
<feature type="chain" id="PRO_0000042565" description="Uncharacterized protein YbiJ">
    <location>
        <begin position="23"/>
        <end position="86"/>
    </location>
</feature>
<name>YBIJ_SHIFL</name>
<keyword id="KW-0574">Periplasm</keyword>
<keyword id="KW-1185">Reference proteome</keyword>
<keyword id="KW-0732">Signal</keyword>
<reference key="1">
    <citation type="journal article" date="2002" name="Nucleic Acids Res.">
        <title>Genome sequence of Shigella flexneri 2a: insights into pathogenicity through comparison with genomes of Escherichia coli K12 and O157.</title>
        <authorList>
            <person name="Jin Q."/>
            <person name="Yuan Z."/>
            <person name="Xu J."/>
            <person name="Wang Y."/>
            <person name="Shen Y."/>
            <person name="Lu W."/>
            <person name="Wang J."/>
            <person name="Liu H."/>
            <person name="Yang J."/>
            <person name="Yang F."/>
            <person name="Zhang X."/>
            <person name="Zhang J."/>
            <person name="Yang G."/>
            <person name="Wu H."/>
            <person name="Qu D."/>
            <person name="Dong J."/>
            <person name="Sun L."/>
            <person name="Xue Y."/>
            <person name="Zhao A."/>
            <person name="Gao Y."/>
            <person name="Zhu J."/>
            <person name="Kan B."/>
            <person name="Ding K."/>
            <person name="Chen S."/>
            <person name="Cheng H."/>
            <person name="Yao Z."/>
            <person name="He B."/>
            <person name="Chen R."/>
            <person name="Ma D."/>
            <person name="Qiang B."/>
            <person name="Wen Y."/>
            <person name="Hou Y."/>
            <person name="Yu J."/>
        </authorList>
    </citation>
    <scope>NUCLEOTIDE SEQUENCE [LARGE SCALE GENOMIC DNA]</scope>
    <source>
        <strain>301 / Serotype 2a</strain>
    </source>
</reference>
<reference key="2">
    <citation type="journal article" date="2003" name="Infect. Immun.">
        <title>Complete genome sequence and comparative genomics of Shigella flexneri serotype 2a strain 2457T.</title>
        <authorList>
            <person name="Wei J."/>
            <person name="Goldberg M.B."/>
            <person name="Burland V."/>
            <person name="Venkatesan M.M."/>
            <person name="Deng W."/>
            <person name="Fournier G."/>
            <person name="Mayhew G.F."/>
            <person name="Plunkett G. III"/>
            <person name="Rose D.J."/>
            <person name="Darling A."/>
            <person name="Mau B."/>
            <person name="Perna N.T."/>
            <person name="Payne S.M."/>
            <person name="Runyen-Janecky L.J."/>
            <person name="Zhou S."/>
            <person name="Schwartz D.C."/>
            <person name="Blattner F.R."/>
        </authorList>
    </citation>
    <scope>NUCLEOTIDE SEQUENCE [LARGE SCALE GENOMIC DNA]</scope>
    <source>
        <strain>ATCC 700930 / 2457T / Serotype 2a</strain>
    </source>
</reference>